<dbReference type="EC" id="5.6.1.7" evidence="1"/>
<dbReference type="EMBL" id="AP006841">
    <property type="protein sequence ID" value="BAD50139.1"/>
    <property type="molecule type" value="Genomic_DNA"/>
</dbReference>
<dbReference type="RefSeq" id="WP_005789739.1">
    <property type="nucleotide sequence ID" value="NZ_UYXF01000026.1"/>
</dbReference>
<dbReference type="RefSeq" id="YP_100673.1">
    <property type="nucleotide sequence ID" value="NC_006347.1"/>
</dbReference>
<dbReference type="SMR" id="Q64QU2"/>
<dbReference type="STRING" id="295405.BF3395"/>
<dbReference type="GeneID" id="60366580"/>
<dbReference type="KEGG" id="bfr:BF3395"/>
<dbReference type="PATRIC" id="fig|295405.11.peg.3263"/>
<dbReference type="HOGENOM" id="CLU_016503_3_0_10"/>
<dbReference type="OrthoDB" id="9766614at2"/>
<dbReference type="Proteomes" id="UP000002197">
    <property type="component" value="Chromosome"/>
</dbReference>
<dbReference type="GO" id="GO:0005737">
    <property type="term" value="C:cytoplasm"/>
    <property type="evidence" value="ECO:0007669"/>
    <property type="project" value="UniProtKB-SubCell"/>
</dbReference>
<dbReference type="GO" id="GO:0005524">
    <property type="term" value="F:ATP binding"/>
    <property type="evidence" value="ECO:0007669"/>
    <property type="project" value="UniProtKB-UniRule"/>
</dbReference>
<dbReference type="GO" id="GO:0140662">
    <property type="term" value="F:ATP-dependent protein folding chaperone"/>
    <property type="evidence" value="ECO:0007669"/>
    <property type="project" value="InterPro"/>
</dbReference>
<dbReference type="GO" id="GO:0016853">
    <property type="term" value="F:isomerase activity"/>
    <property type="evidence" value="ECO:0007669"/>
    <property type="project" value="UniProtKB-KW"/>
</dbReference>
<dbReference type="GO" id="GO:0051082">
    <property type="term" value="F:unfolded protein binding"/>
    <property type="evidence" value="ECO:0007669"/>
    <property type="project" value="UniProtKB-UniRule"/>
</dbReference>
<dbReference type="GO" id="GO:0042026">
    <property type="term" value="P:protein refolding"/>
    <property type="evidence" value="ECO:0007669"/>
    <property type="project" value="UniProtKB-UniRule"/>
</dbReference>
<dbReference type="CDD" id="cd03344">
    <property type="entry name" value="GroEL"/>
    <property type="match status" value="1"/>
</dbReference>
<dbReference type="FunFam" id="3.50.7.10:FF:000001">
    <property type="entry name" value="60 kDa chaperonin"/>
    <property type="match status" value="1"/>
</dbReference>
<dbReference type="Gene3D" id="3.50.7.10">
    <property type="entry name" value="GroEL"/>
    <property type="match status" value="1"/>
</dbReference>
<dbReference type="Gene3D" id="1.10.560.10">
    <property type="entry name" value="GroEL-like equatorial domain"/>
    <property type="match status" value="1"/>
</dbReference>
<dbReference type="Gene3D" id="3.30.260.10">
    <property type="entry name" value="TCP-1-like chaperonin intermediate domain"/>
    <property type="match status" value="1"/>
</dbReference>
<dbReference type="HAMAP" id="MF_00600">
    <property type="entry name" value="CH60"/>
    <property type="match status" value="1"/>
</dbReference>
<dbReference type="InterPro" id="IPR018370">
    <property type="entry name" value="Chaperonin_Cpn60_CS"/>
</dbReference>
<dbReference type="InterPro" id="IPR001844">
    <property type="entry name" value="Cpn60/GroEL"/>
</dbReference>
<dbReference type="InterPro" id="IPR002423">
    <property type="entry name" value="Cpn60/GroEL/TCP-1"/>
</dbReference>
<dbReference type="InterPro" id="IPR027409">
    <property type="entry name" value="GroEL-like_apical_dom_sf"/>
</dbReference>
<dbReference type="InterPro" id="IPR027413">
    <property type="entry name" value="GROEL-like_equatorial_sf"/>
</dbReference>
<dbReference type="InterPro" id="IPR027410">
    <property type="entry name" value="TCP-1-like_intermed_sf"/>
</dbReference>
<dbReference type="NCBIfam" id="TIGR02348">
    <property type="entry name" value="GroEL"/>
    <property type="match status" value="1"/>
</dbReference>
<dbReference type="NCBIfam" id="NF000592">
    <property type="entry name" value="PRK00013.1"/>
    <property type="match status" value="1"/>
</dbReference>
<dbReference type="NCBIfam" id="NF009487">
    <property type="entry name" value="PRK12849.1"/>
    <property type="match status" value="1"/>
</dbReference>
<dbReference type="NCBIfam" id="NF009488">
    <property type="entry name" value="PRK12850.1"/>
    <property type="match status" value="1"/>
</dbReference>
<dbReference type="NCBIfam" id="NF009489">
    <property type="entry name" value="PRK12851.1"/>
    <property type="match status" value="1"/>
</dbReference>
<dbReference type="PANTHER" id="PTHR45633">
    <property type="entry name" value="60 KDA HEAT SHOCK PROTEIN, MITOCHONDRIAL"/>
    <property type="match status" value="1"/>
</dbReference>
<dbReference type="Pfam" id="PF00118">
    <property type="entry name" value="Cpn60_TCP1"/>
    <property type="match status" value="1"/>
</dbReference>
<dbReference type="PRINTS" id="PR00298">
    <property type="entry name" value="CHAPERONIN60"/>
</dbReference>
<dbReference type="SUPFAM" id="SSF52029">
    <property type="entry name" value="GroEL apical domain-like"/>
    <property type="match status" value="1"/>
</dbReference>
<dbReference type="SUPFAM" id="SSF48592">
    <property type="entry name" value="GroEL equatorial domain-like"/>
    <property type="match status" value="1"/>
</dbReference>
<dbReference type="SUPFAM" id="SSF54849">
    <property type="entry name" value="GroEL-intermediate domain like"/>
    <property type="match status" value="1"/>
</dbReference>
<dbReference type="PROSITE" id="PS00296">
    <property type="entry name" value="CHAPERONINS_CPN60"/>
    <property type="match status" value="1"/>
</dbReference>
<accession>Q64QU2</accession>
<proteinExistence type="inferred from homology"/>
<protein>
    <recommendedName>
        <fullName evidence="1">Chaperonin GroEL</fullName>
        <ecNumber evidence="1">5.6.1.7</ecNumber>
    </recommendedName>
    <alternativeName>
        <fullName evidence="1">60 kDa chaperonin</fullName>
    </alternativeName>
    <alternativeName>
        <fullName evidence="1">Chaperonin-60</fullName>
        <shortName evidence="1">Cpn60</shortName>
    </alternativeName>
</protein>
<sequence length="545" mass="58199">MAKEILFNIEARDQLKKGVDALANAVKVTLGPKGRNVIIEKKFGAPHITKDGVTVAKEIELTDAYQNTGAQLVKEVASKTGDDAGDGTTTATVLAQAIIAEGLKNVTAGASPMDIKRGIDKAVAKVVDSIKHQAEKVGDNYDKIEQVATVSANNDPVIGKLIADAMRKVSKDGVITIEEAKGTDTTIGVVEGMQFDRGYLSAYFVTNTEKMECEMEKPYILIYDKKISNLKDFLPILEPAVQSGRPLLVIAEDVDSEALTTLVVNRLRSQLKICAVKAPGFGDRRKEMLEDIAVLTGGVVISEEKGLKLEQATIEMLGTADKVTVSKDNTTIVNGAGAKENIKERCDQIKAQIAATKSDYDREKLQERLAKLSGGVAVLYVGAASEVEMKEKKDRVDDALRATRAAIEEGIVAGGGVAYIRAIESLDGLKGENDDETTGIAIIKRAIEEPLRQIVANAGKEGAVVVQKVSEGKGDFGYNARTDVYENMHAAGVVDPAKVTRVALENAASIAGMFLTTECVIVEKKEDKPEMPMGAPGMGGMGGMM</sequence>
<comment type="function">
    <text evidence="1">Together with its co-chaperonin GroES, plays an essential role in assisting protein folding. The GroEL-GroES system forms a nano-cage that allows encapsulation of the non-native substrate proteins and provides a physical environment optimized to promote and accelerate protein folding.</text>
</comment>
<comment type="catalytic activity">
    <reaction evidence="1">
        <text>ATP + H2O + a folded polypeptide = ADP + phosphate + an unfolded polypeptide.</text>
        <dbReference type="EC" id="5.6.1.7"/>
    </reaction>
</comment>
<comment type="subunit">
    <text evidence="1">Forms a cylinder of 14 subunits composed of two heptameric rings stacked back-to-back. Interacts with the co-chaperonin GroES.</text>
</comment>
<comment type="subcellular location">
    <subcellularLocation>
        <location evidence="1">Cytoplasm</location>
    </subcellularLocation>
</comment>
<comment type="similarity">
    <text evidence="1">Belongs to the chaperonin (HSP60) family.</text>
</comment>
<reference key="1">
    <citation type="journal article" date="2004" name="Proc. Natl. Acad. Sci. U.S.A.">
        <title>Genomic analysis of Bacteroides fragilis reveals extensive DNA inversions regulating cell surface adaptation.</title>
        <authorList>
            <person name="Kuwahara T."/>
            <person name="Yamashita A."/>
            <person name="Hirakawa H."/>
            <person name="Nakayama H."/>
            <person name="Toh H."/>
            <person name="Okada N."/>
            <person name="Kuhara S."/>
            <person name="Hattori M."/>
            <person name="Hayashi T."/>
            <person name="Ohnishi Y."/>
        </authorList>
    </citation>
    <scope>NUCLEOTIDE SEQUENCE [LARGE SCALE GENOMIC DNA]</scope>
    <source>
        <strain>YCH46</strain>
    </source>
</reference>
<keyword id="KW-0067">ATP-binding</keyword>
<keyword id="KW-0143">Chaperone</keyword>
<keyword id="KW-0963">Cytoplasm</keyword>
<keyword id="KW-0413">Isomerase</keyword>
<keyword id="KW-0547">Nucleotide-binding</keyword>
<evidence type="ECO:0000255" key="1">
    <source>
        <dbReference type="HAMAP-Rule" id="MF_00600"/>
    </source>
</evidence>
<feature type="chain" id="PRO_0000063272" description="Chaperonin GroEL">
    <location>
        <begin position="1"/>
        <end position="545"/>
    </location>
</feature>
<feature type="binding site" evidence="1">
    <location>
        <begin position="29"/>
        <end position="32"/>
    </location>
    <ligand>
        <name>ATP</name>
        <dbReference type="ChEBI" id="CHEBI:30616"/>
    </ligand>
</feature>
<feature type="binding site" evidence="1">
    <location>
        <position position="50"/>
    </location>
    <ligand>
        <name>ATP</name>
        <dbReference type="ChEBI" id="CHEBI:30616"/>
    </ligand>
</feature>
<feature type="binding site" evidence="1">
    <location>
        <begin position="86"/>
        <end position="90"/>
    </location>
    <ligand>
        <name>ATP</name>
        <dbReference type="ChEBI" id="CHEBI:30616"/>
    </ligand>
</feature>
<feature type="binding site" evidence="1">
    <location>
        <position position="415"/>
    </location>
    <ligand>
        <name>ATP</name>
        <dbReference type="ChEBI" id="CHEBI:30616"/>
    </ligand>
</feature>
<feature type="binding site" evidence="1">
    <location>
        <position position="495"/>
    </location>
    <ligand>
        <name>ATP</name>
        <dbReference type="ChEBI" id="CHEBI:30616"/>
    </ligand>
</feature>
<gene>
    <name evidence="1" type="primary">groEL</name>
    <name evidence="1" type="synonym">groL</name>
    <name type="ordered locus">BF3395</name>
</gene>
<name>CH60_BACFR</name>
<organism>
    <name type="scientific">Bacteroides fragilis (strain YCH46)</name>
    <dbReference type="NCBI Taxonomy" id="295405"/>
    <lineage>
        <taxon>Bacteria</taxon>
        <taxon>Pseudomonadati</taxon>
        <taxon>Bacteroidota</taxon>
        <taxon>Bacteroidia</taxon>
        <taxon>Bacteroidales</taxon>
        <taxon>Bacteroidaceae</taxon>
        <taxon>Bacteroides</taxon>
    </lineage>
</organism>